<accession>B3EMS8</accession>
<sequence>MLSPYGKGTLVTSLLISLLLAGAGLIFPGIVQAVFSTASVGLALFALFFFRDPSRTVPSEPNAVLAPADGRVLLIKKIAHPFTGQNSTLVSIFMSPFNVHVNRIPLQGRIAHLSYSPGKHLMAFNHASMADNERMEIGLENSQCRIIFSQVAGFIARRIVCSLRVGDNVAAGSRFGMITFGSRLDIVVPESTRLTVSKGCKTVAGETVIGYVK</sequence>
<gene>
    <name evidence="1" type="primary">psd</name>
    <name type="ordered locus">Cphamn1_0597</name>
</gene>
<organism>
    <name type="scientific">Chlorobium phaeobacteroides (strain BS1)</name>
    <dbReference type="NCBI Taxonomy" id="331678"/>
    <lineage>
        <taxon>Bacteria</taxon>
        <taxon>Pseudomonadati</taxon>
        <taxon>Chlorobiota</taxon>
        <taxon>Chlorobiia</taxon>
        <taxon>Chlorobiales</taxon>
        <taxon>Chlorobiaceae</taxon>
        <taxon>Chlorobium/Pelodictyon group</taxon>
        <taxon>Chlorobium</taxon>
    </lineage>
</organism>
<protein>
    <recommendedName>
        <fullName evidence="1">Phosphatidylserine decarboxylase proenzyme</fullName>
        <ecNumber evidence="1">4.1.1.65</ecNumber>
    </recommendedName>
    <component>
        <recommendedName>
            <fullName evidence="1">Phosphatidylserine decarboxylase alpha chain</fullName>
        </recommendedName>
    </component>
    <component>
        <recommendedName>
            <fullName evidence="1">Phosphatidylserine decarboxylase beta chain</fullName>
        </recommendedName>
    </component>
</protein>
<keyword id="KW-1003">Cell membrane</keyword>
<keyword id="KW-0210">Decarboxylase</keyword>
<keyword id="KW-0444">Lipid biosynthesis</keyword>
<keyword id="KW-0443">Lipid metabolism</keyword>
<keyword id="KW-0456">Lyase</keyword>
<keyword id="KW-0472">Membrane</keyword>
<keyword id="KW-0594">Phospholipid biosynthesis</keyword>
<keyword id="KW-1208">Phospholipid metabolism</keyword>
<keyword id="KW-0670">Pyruvate</keyword>
<keyword id="KW-0865">Zymogen</keyword>
<evidence type="ECO:0000255" key="1">
    <source>
        <dbReference type="HAMAP-Rule" id="MF_00664"/>
    </source>
</evidence>
<comment type="function">
    <text evidence="1">Catalyzes the formation of phosphatidylethanolamine (PtdEtn) from phosphatidylserine (PtdSer).</text>
</comment>
<comment type="catalytic activity">
    <reaction evidence="1">
        <text>a 1,2-diacyl-sn-glycero-3-phospho-L-serine + H(+) = a 1,2-diacyl-sn-glycero-3-phosphoethanolamine + CO2</text>
        <dbReference type="Rhea" id="RHEA:20828"/>
        <dbReference type="ChEBI" id="CHEBI:15378"/>
        <dbReference type="ChEBI" id="CHEBI:16526"/>
        <dbReference type="ChEBI" id="CHEBI:57262"/>
        <dbReference type="ChEBI" id="CHEBI:64612"/>
        <dbReference type="EC" id="4.1.1.65"/>
    </reaction>
</comment>
<comment type="cofactor">
    <cofactor evidence="1">
        <name>pyruvate</name>
        <dbReference type="ChEBI" id="CHEBI:15361"/>
    </cofactor>
    <text evidence="1">Binds 1 pyruvoyl group covalently per subunit.</text>
</comment>
<comment type="pathway">
    <text evidence="1">Phospholipid metabolism; phosphatidylethanolamine biosynthesis; phosphatidylethanolamine from CDP-diacylglycerol: step 2/2.</text>
</comment>
<comment type="subunit">
    <text evidence="1">Heterodimer of a large membrane-associated beta subunit and a small pyruvoyl-containing alpha subunit.</text>
</comment>
<comment type="subcellular location">
    <subcellularLocation>
        <location evidence="1">Cell membrane</location>
        <topology evidence="1">Peripheral membrane protein</topology>
    </subcellularLocation>
</comment>
<comment type="PTM">
    <text evidence="1">Is synthesized initially as an inactive proenzyme. Formation of the active enzyme involves a self-maturation process in which the active site pyruvoyl group is generated from an internal serine residue via an autocatalytic post-translational modification. Two non-identical subunits are generated from the proenzyme in this reaction, and the pyruvate is formed at the N-terminus of the alpha chain, which is derived from the carboxyl end of the proenzyme. The post-translation cleavage follows an unusual pathway, termed non-hydrolytic serinolysis, in which the side chain hydroxyl group of the serine supplies its oxygen atom to form the C-terminus of the beta chain, while the remainder of the serine residue undergoes an oxidative deamination to produce ammonia and the pyruvoyl prosthetic group on the alpha chain.</text>
</comment>
<comment type="similarity">
    <text evidence="1">Belongs to the phosphatidylserine decarboxylase family. PSD-A subfamily.</text>
</comment>
<proteinExistence type="inferred from homology"/>
<dbReference type="EC" id="4.1.1.65" evidence="1"/>
<dbReference type="EMBL" id="CP001101">
    <property type="protein sequence ID" value="ACE03556.1"/>
    <property type="molecule type" value="Genomic_DNA"/>
</dbReference>
<dbReference type="STRING" id="331678.Cphamn1_0597"/>
<dbReference type="KEGG" id="cpb:Cphamn1_0597"/>
<dbReference type="eggNOG" id="COG0688">
    <property type="taxonomic scope" value="Bacteria"/>
</dbReference>
<dbReference type="HOGENOM" id="CLU_072492_2_0_10"/>
<dbReference type="OrthoDB" id="9790893at2"/>
<dbReference type="UniPathway" id="UPA00558">
    <property type="reaction ID" value="UER00616"/>
</dbReference>
<dbReference type="GO" id="GO:0005886">
    <property type="term" value="C:plasma membrane"/>
    <property type="evidence" value="ECO:0007669"/>
    <property type="project" value="UniProtKB-SubCell"/>
</dbReference>
<dbReference type="GO" id="GO:0004609">
    <property type="term" value="F:phosphatidylserine decarboxylase activity"/>
    <property type="evidence" value="ECO:0007669"/>
    <property type="project" value="UniProtKB-UniRule"/>
</dbReference>
<dbReference type="GO" id="GO:0006646">
    <property type="term" value="P:phosphatidylethanolamine biosynthetic process"/>
    <property type="evidence" value="ECO:0007669"/>
    <property type="project" value="UniProtKB-UniRule"/>
</dbReference>
<dbReference type="HAMAP" id="MF_00664">
    <property type="entry name" value="PS_decarb_PSD_A"/>
    <property type="match status" value="1"/>
</dbReference>
<dbReference type="InterPro" id="IPR003817">
    <property type="entry name" value="PS_Dcarbxylase"/>
</dbReference>
<dbReference type="InterPro" id="IPR033175">
    <property type="entry name" value="PSD-A"/>
</dbReference>
<dbReference type="NCBIfam" id="NF003678">
    <property type="entry name" value="PRK05305.1-2"/>
    <property type="match status" value="1"/>
</dbReference>
<dbReference type="NCBIfam" id="NF003682">
    <property type="entry name" value="PRK05305.2-2"/>
    <property type="match status" value="1"/>
</dbReference>
<dbReference type="NCBIfam" id="NF003685">
    <property type="entry name" value="PRK05305.2-5"/>
    <property type="match status" value="1"/>
</dbReference>
<dbReference type="PANTHER" id="PTHR35809">
    <property type="entry name" value="ARCHAETIDYLSERINE DECARBOXYLASE PROENZYME-RELATED"/>
    <property type="match status" value="1"/>
</dbReference>
<dbReference type="PANTHER" id="PTHR35809:SF1">
    <property type="entry name" value="ARCHAETIDYLSERINE DECARBOXYLASE PROENZYME-RELATED"/>
    <property type="match status" value="1"/>
</dbReference>
<dbReference type="Pfam" id="PF02666">
    <property type="entry name" value="PS_Dcarbxylase"/>
    <property type="match status" value="1"/>
</dbReference>
<feature type="chain" id="PRO_1000131460" description="Phosphatidylserine decarboxylase beta chain" evidence="1">
    <location>
        <begin position="1"/>
        <end position="181"/>
    </location>
</feature>
<feature type="chain" id="PRO_1000131461" description="Phosphatidylserine decarboxylase alpha chain" evidence="1">
    <location>
        <begin position="182"/>
        <end position="213"/>
    </location>
</feature>
<feature type="active site" description="Schiff-base intermediate with substrate; via pyruvic acid" evidence="1">
    <location>
        <position position="182"/>
    </location>
</feature>
<feature type="site" description="Cleavage (non-hydrolytic); by autocatalysis" evidence="1">
    <location>
        <begin position="181"/>
        <end position="182"/>
    </location>
</feature>
<feature type="modified residue" description="Pyruvic acid (Ser); by autocatalysis" evidence="1">
    <location>
        <position position="182"/>
    </location>
</feature>
<name>PSD_CHLPB</name>
<reference key="1">
    <citation type="submission" date="2008-06" db="EMBL/GenBank/DDBJ databases">
        <title>Complete sequence of Chlorobium phaeobacteroides BS1.</title>
        <authorList>
            <consortium name="US DOE Joint Genome Institute"/>
            <person name="Lucas S."/>
            <person name="Copeland A."/>
            <person name="Lapidus A."/>
            <person name="Glavina del Rio T."/>
            <person name="Dalin E."/>
            <person name="Tice H."/>
            <person name="Bruce D."/>
            <person name="Goodwin L."/>
            <person name="Pitluck S."/>
            <person name="Schmutz J."/>
            <person name="Larimer F."/>
            <person name="Land M."/>
            <person name="Hauser L."/>
            <person name="Kyrpides N."/>
            <person name="Ovchinnikova G."/>
            <person name="Li T."/>
            <person name="Liu Z."/>
            <person name="Zhao F."/>
            <person name="Overmann J."/>
            <person name="Bryant D.A."/>
            <person name="Richardson P."/>
        </authorList>
    </citation>
    <scope>NUCLEOTIDE SEQUENCE [LARGE SCALE GENOMIC DNA]</scope>
    <source>
        <strain>BS1</strain>
    </source>
</reference>